<sequence length="869" mass="95851">MPADTPAGSAPARFDPAQIEPKWRAAWDLAGTFTATPDPAKQKYYVLEMFPYPSGRIHMGHVRNYTMGDVIARYKASCGFSVLHPMGWDAFGMPAENAAMATGGHPKDWTYANIAEMRAQMKPLGLSIDWSREFATCDEAYYGQQQSMFLDFLEKGLVYRKNAVVNWDPVDMTVLANEQVIDGKGWRSGAEVERRELTQWFFKISDFADDLLSALDGLENWPEKVRLMQANWIGKSRGLEFAFARTDGGDPIPVYTTRPDTLMGASFVGISPGHPIAKALAAQRPEVADFLAEVARGGTTEAALETAPKLGFDTGITVRHPLDPNWELPVWIANFILMDYGTGAIFACPAHDQRDLDFCRKYDLPVIDTFFALDDPTPVGDTAFVPPKTEPVRWVEHFAGLDIATGQEAIEATIDFAEAAGWGRGVEQFRLRDWGLSRQRYWGCPIPVVHCDKCGVVPERKENLPIALPYDEDGRPIDFSIPGNPLDRHPSWRDCACPACGAPARRETDTMDTFVDSSWYFARFTAPRAETPTDPAEVGYWMNVDQYIGGVEHAILHLLYSRFFARAMHLCGHLPESAREPFDALFTQGMVTHAIYKTTGTDGRPVYHYPEEVETTEEGAVLKKTGAPVDIVPSAKMSKSKNNVVDPLAIIDAYGADTARWFVMSDSPPERDVEWTASGAEAAFKHLGRVWRLAEDLRRNAEEAATAGSAEEARALARASARAIAEVTAGIEGFAFNKSVAKLYEFTNTIQKSKAPRAEKRAALKTMAQLMSPMTPHLAEEVWSMLGGIGLVAEAPWPEADPALLVEDTVTLPIQINGKRRSELAVPKDMPREEVEKLALADAAVLKALAGGAPRKLIVVPGRIVNVVI</sequence>
<reference key="1">
    <citation type="journal article" date="2010" name="ISME J.">
        <title>The complete genome sequence of the algal symbiont Dinoroseobacter shibae: a hitchhiker's guide to life in the sea.</title>
        <authorList>
            <person name="Wagner-Dobler I."/>
            <person name="Ballhausen B."/>
            <person name="Berger M."/>
            <person name="Brinkhoff T."/>
            <person name="Buchholz I."/>
            <person name="Bunk B."/>
            <person name="Cypionka H."/>
            <person name="Daniel R."/>
            <person name="Drepper T."/>
            <person name="Gerdts G."/>
            <person name="Hahnke S."/>
            <person name="Han C."/>
            <person name="Jahn D."/>
            <person name="Kalhoefer D."/>
            <person name="Kiss H."/>
            <person name="Klenk H.P."/>
            <person name="Kyrpides N."/>
            <person name="Liebl W."/>
            <person name="Liesegang H."/>
            <person name="Meincke L."/>
            <person name="Pati A."/>
            <person name="Petersen J."/>
            <person name="Piekarski T."/>
            <person name="Pommerenke C."/>
            <person name="Pradella S."/>
            <person name="Pukall R."/>
            <person name="Rabus R."/>
            <person name="Stackebrandt E."/>
            <person name="Thole S."/>
            <person name="Thompson L."/>
            <person name="Tielen P."/>
            <person name="Tomasch J."/>
            <person name="von Jan M."/>
            <person name="Wanphrut N."/>
            <person name="Wichels A."/>
            <person name="Zech H."/>
            <person name="Simon M."/>
        </authorList>
    </citation>
    <scope>NUCLEOTIDE SEQUENCE [LARGE SCALE GENOMIC DNA]</scope>
    <source>
        <strain>DSM 16493 / NCIMB 14021 / DFL 12</strain>
    </source>
</reference>
<keyword id="KW-0030">Aminoacyl-tRNA synthetase</keyword>
<keyword id="KW-0067">ATP-binding</keyword>
<keyword id="KW-0963">Cytoplasm</keyword>
<keyword id="KW-0436">Ligase</keyword>
<keyword id="KW-0547">Nucleotide-binding</keyword>
<keyword id="KW-0648">Protein biosynthesis</keyword>
<keyword id="KW-1185">Reference proteome</keyword>
<feature type="chain" id="PRO_0000334751" description="Leucine--tRNA ligase">
    <location>
        <begin position="1"/>
        <end position="869"/>
    </location>
</feature>
<feature type="short sequence motif" description="'HIGH' region">
    <location>
        <begin position="51"/>
        <end position="61"/>
    </location>
</feature>
<feature type="short sequence motif" description="'KMSKS' region">
    <location>
        <begin position="636"/>
        <end position="640"/>
    </location>
</feature>
<feature type="binding site" evidence="1">
    <location>
        <position position="639"/>
    </location>
    <ligand>
        <name>ATP</name>
        <dbReference type="ChEBI" id="CHEBI:30616"/>
    </ligand>
</feature>
<evidence type="ECO:0000255" key="1">
    <source>
        <dbReference type="HAMAP-Rule" id="MF_00049"/>
    </source>
</evidence>
<accession>A8LJY0</accession>
<proteinExistence type="inferred from homology"/>
<name>SYL_DINSH</name>
<gene>
    <name evidence="1" type="primary">leuS</name>
    <name type="ordered locus">Dshi_0057</name>
</gene>
<comment type="catalytic activity">
    <reaction evidence="1">
        <text>tRNA(Leu) + L-leucine + ATP = L-leucyl-tRNA(Leu) + AMP + diphosphate</text>
        <dbReference type="Rhea" id="RHEA:11688"/>
        <dbReference type="Rhea" id="RHEA-COMP:9613"/>
        <dbReference type="Rhea" id="RHEA-COMP:9622"/>
        <dbReference type="ChEBI" id="CHEBI:30616"/>
        <dbReference type="ChEBI" id="CHEBI:33019"/>
        <dbReference type="ChEBI" id="CHEBI:57427"/>
        <dbReference type="ChEBI" id="CHEBI:78442"/>
        <dbReference type="ChEBI" id="CHEBI:78494"/>
        <dbReference type="ChEBI" id="CHEBI:456215"/>
        <dbReference type="EC" id="6.1.1.4"/>
    </reaction>
</comment>
<comment type="subcellular location">
    <subcellularLocation>
        <location evidence="1">Cytoplasm</location>
    </subcellularLocation>
</comment>
<comment type="similarity">
    <text evidence="1">Belongs to the class-I aminoacyl-tRNA synthetase family.</text>
</comment>
<dbReference type="EC" id="6.1.1.4" evidence="1"/>
<dbReference type="EMBL" id="CP000830">
    <property type="protein sequence ID" value="ABV91806.1"/>
    <property type="molecule type" value="Genomic_DNA"/>
</dbReference>
<dbReference type="RefSeq" id="WP_012176739.1">
    <property type="nucleotide sequence ID" value="NC_009952.1"/>
</dbReference>
<dbReference type="SMR" id="A8LJY0"/>
<dbReference type="STRING" id="398580.Dshi_0057"/>
<dbReference type="KEGG" id="dsh:Dshi_0057"/>
<dbReference type="eggNOG" id="COG0495">
    <property type="taxonomic scope" value="Bacteria"/>
</dbReference>
<dbReference type="HOGENOM" id="CLU_004427_0_0_5"/>
<dbReference type="OrthoDB" id="9810365at2"/>
<dbReference type="Proteomes" id="UP000006833">
    <property type="component" value="Chromosome"/>
</dbReference>
<dbReference type="GO" id="GO:0005829">
    <property type="term" value="C:cytosol"/>
    <property type="evidence" value="ECO:0007669"/>
    <property type="project" value="TreeGrafter"/>
</dbReference>
<dbReference type="GO" id="GO:0002161">
    <property type="term" value="F:aminoacyl-tRNA deacylase activity"/>
    <property type="evidence" value="ECO:0007669"/>
    <property type="project" value="InterPro"/>
</dbReference>
<dbReference type="GO" id="GO:0005524">
    <property type="term" value="F:ATP binding"/>
    <property type="evidence" value="ECO:0007669"/>
    <property type="project" value="UniProtKB-UniRule"/>
</dbReference>
<dbReference type="GO" id="GO:0004823">
    <property type="term" value="F:leucine-tRNA ligase activity"/>
    <property type="evidence" value="ECO:0007669"/>
    <property type="project" value="UniProtKB-UniRule"/>
</dbReference>
<dbReference type="GO" id="GO:0006429">
    <property type="term" value="P:leucyl-tRNA aminoacylation"/>
    <property type="evidence" value="ECO:0007669"/>
    <property type="project" value="UniProtKB-UniRule"/>
</dbReference>
<dbReference type="CDD" id="cd07958">
    <property type="entry name" value="Anticodon_Ia_Leu_BEm"/>
    <property type="match status" value="1"/>
</dbReference>
<dbReference type="CDD" id="cd00812">
    <property type="entry name" value="LeuRS_core"/>
    <property type="match status" value="1"/>
</dbReference>
<dbReference type="FunFam" id="1.10.730.10:FF:000002">
    <property type="entry name" value="Leucine--tRNA ligase"/>
    <property type="match status" value="1"/>
</dbReference>
<dbReference type="Gene3D" id="2.20.28.290">
    <property type="match status" value="1"/>
</dbReference>
<dbReference type="Gene3D" id="3.10.20.590">
    <property type="match status" value="1"/>
</dbReference>
<dbReference type="Gene3D" id="3.40.50.620">
    <property type="entry name" value="HUPs"/>
    <property type="match status" value="2"/>
</dbReference>
<dbReference type="Gene3D" id="1.10.730.10">
    <property type="entry name" value="Isoleucyl-tRNA Synthetase, Domain 1"/>
    <property type="match status" value="1"/>
</dbReference>
<dbReference type="HAMAP" id="MF_00049_B">
    <property type="entry name" value="Leu_tRNA_synth_B"/>
    <property type="match status" value="1"/>
</dbReference>
<dbReference type="InterPro" id="IPR001412">
    <property type="entry name" value="aa-tRNA-synth_I_CS"/>
</dbReference>
<dbReference type="InterPro" id="IPR002300">
    <property type="entry name" value="aa-tRNA-synth_Ia"/>
</dbReference>
<dbReference type="InterPro" id="IPR002302">
    <property type="entry name" value="Leu-tRNA-ligase"/>
</dbReference>
<dbReference type="InterPro" id="IPR025709">
    <property type="entry name" value="Leu_tRNA-synth_edit"/>
</dbReference>
<dbReference type="InterPro" id="IPR013155">
    <property type="entry name" value="M/V/L/I-tRNA-synth_anticd-bd"/>
</dbReference>
<dbReference type="InterPro" id="IPR015413">
    <property type="entry name" value="Methionyl/Leucyl_tRNA_Synth"/>
</dbReference>
<dbReference type="InterPro" id="IPR014729">
    <property type="entry name" value="Rossmann-like_a/b/a_fold"/>
</dbReference>
<dbReference type="InterPro" id="IPR009080">
    <property type="entry name" value="tRNAsynth_Ia_anticodon-bd"/>
</dbReference>
<dbReference type="InterPro" id="IPR009008">
    <property type="entry name" value="Val/Leu/Ile-tRNA-synth_edit"/>
</dbReference>
<dbReference type="NCBIfam" id="TIGR00396">
    <property type="entry name" value="leuS_bact"/>
    <property type="match status" value="1"/>
</dbReference>
<dbReference type="PANTHER" id="PTHR43740:SF2">
    <property type="entry name" value="LEUCINE--TRNA LIGASE, MITOCHONDRIAL"/>
    <property type="match status" value="1"/>
</dbReference>
<dbReference type="PANTHER" id="PTHR43740">
    <property type="entry name" value="LEUCYL-TRNA SYNTHETASE"/>
    <property type="match status" value="1"/>
</dbReference>
<dbReference type="Pfam" id="PF08264">
    <property type="entry name" value="Anticodon_1"/>
    <property type="match status" value="1"/>
</dbReference>
<dbReference type="Pfam" id="PF00133">
    <property type="entry name" value="tRNA-synt_1"/>
    <property type="match status" value="1"/>
</dbReference>
<dbReference type="Pfam" id="PF13603">
    <property type="entry name" value="tRNA-synt_1_2"/>
    <property type="match status" value="1"/>
</dbReference>
<dbReference type="Pfam" id="PF09334">
    <property type="entry name" value="tRNA-synt_1g"/>
    <property type="match status" value="1"/>
</dbReference>
<dbReference type="PRINTS" id="PR00985">
    <property type="entry name" value="TRNASYNTHLEU"/>
</dbReference>
<dbReference type="SUPFAM" id="SSF47323">
    <property type="entry name" value="Anticodon-binding domain of a subclass of class I aminoacyl-tRNA synthetases"/>
    <property type="match status" value="1"/>
</dbReference>
<dbReference type="SUPFAM" id="SSF52374">
    <property type="entry name" value="Nucleotidylyl transferase"/>
    <property type="match status" value="1"/>
</dbReference>
<dbReference type="SUPFAM" id="SSF50677">
    <property type="entry name" value="ValRS/IleRS/LeuRS editing domain"/>
    <property type="match status" value="1"/>
</dbReference>
<dbReference type="PROSITE" id="PS00178">
    <property type="entry name" value="AA_TRNA_LIGASE_I"/>
    <property type="match status" value="1"/>
</dbReference>
<protein>
    <recommendedName>
        <fullName evidence="1">Leucine--tRNA ligase</fullName>
        <ecNumber evidence="1">6.1.1.4</ecNumber>
    </recommendedName>
    <alternativeName>
        <fullName evidence="1">Leucyl-tRNA synthetase</fullName>
        <shortName evidence="1">LeuRS</shortName>
    </alternativeName>
</protein>
<organism>
    <name type="scientific">Dinoroseobacter shibae (strain DSM 16493 / NCIMB 14021 / DFL 12)</name>
    <dbReference type="NCBI Taxonomy" id="398580"/>
    <lineage>
        <taxon>Bacteria</taxon>
        <taxon>Pseudomonadati</taxon>
        <taxon>Pseudomonadota</taxon>
        <taxon>Alphaproteobacteria</taxon>
        <taxon>Rhodobacterales</taxon>
        <taxon>Roseobacteraceae</taxon>
        <taxon>Dinoroseobacter</taxon>
    </lineage>
</organism>